<evidence type="ECO:0000255" key="1">
    <source>
        <dbReference type="HAMAP-Rule" id="MF_00111"/>
    </source>
</evidence>
<sequence length="425" mass="45870">MHKILVRSNYKPLVGQIKINGSKNAILPIMAASLLSSSSVVLHNVPDLIDVHLMSELLEGLGAKVNFMHNKDHKANHTLETDCSNINNYAIQYETASKLRASFLMLGPMLSRFGKARTAFPGGCNIGKRPVDMHIKALEEMGAKIEIDGYNIIATVKGKLQGRKITLEKISVGATENIIMAATLAEGVTTINNAATEPEILDLIEFLKKIGADIKINNTKVIITGVKKLNGCIHKIISDRIEAGTYALAAIITNGKLVLEGINLSDIRCIANELEAIGAMVELYDGSIVISRKNGSIKSTNVATDPYPNFPSDMQPQLMSAMCIADGISVIEENIFENRFSHADELRKLGANISIKKNKAAINGIKSLSGANLYATDLRSTAALVLASLVASGETTINNSHHLWRGYEAMHEKLNSCGADISISP</sequence>
<comment type="function">
    <text evidence="1">Cell wall formation. Adds enolpyruvyl to UDP-N-acetylglucosamine.</text>
</comment>
<comment type="catalytic activity">
    <reaction evidence="1">
        <text>phosphoenolpyruvate + UDP-N-acetyl-alpha-D-glucosamine = UDP-N-acetyl-3-O-(1-carboxyvinyl)-alpha-D-glucosamine + phosphate</text>
        <dbReference type="Rhea" id="RHEA:18681"/>
        <dbReference type="ChEBI" id="CHEBI:43474"/>
        <dbReference type="ChEBI" id="CHEBI:57705"/>
        <dbReference type="ChEBI" id="CHEBI:58702"/>
        <dbReference type="ChEBI" id="CHEBI:68483"/>
        <dbReference type="EC" id="2.5.1.7"/>
    </reaction>
</comment>
<comment type="pathway">
    <text evidence="1">Cell wall biogenesis; peptidoglycan biosynthesis.</text>
</comment>
<comment type="subcellular location">
    <subcellularLocation>
        <location evidence="1">Cytoplasm</location>
    </subcellularLocation>
</comment>
<comment type="similarity">
    <text evidence="1">Belongs to the EPSP synthase family. MurA subfamily.</text>
</comment>
<proteinExistence type="inferred from homology"/>
<reference key="1">
    <citation type="journal article" date="2005" name="PLoS Biol.">
        <title>The Wolbachia genome of Brugia malayi: endosymbiont evolution within a human pathogenic nematode.</title>
        <authorList>
            <person name="Foster J."/>
            <person name="Ganatra M."/>
            <person name="Kamal I."/>
            <person name="Ware J."/>
            <person name="Makarova K."/>
            <person name="Ivanova N."/>
            <person name="Bhattacharyya A."/>
            <person name="Kapatral V."/>
            <person name="Kumar S."/>
            <person name="Posfai J."/>
            <person name="Vincze T."/>
            <person name="Ingram J."/>
            <person name="Moran L."/>
            <person name="Lapidus A."/>
            <person name="Omelchenko M."/>
            <person name="Kyrpides N."/>
            <person name="Ghedin E."/>
            <person name="Wang S."/>
            <person name="Goltsman E."/>
            <person name="Joukov V."/>
            <person name="Ostrovskaya O."/>
            <person name="Tsukerman K."/>
            <person name="Mazur M."/>
            <person name="Comb D."/>
            <person name="Koonin E."/>
            <person name="Slatko B."/>
        </authorList>
    </citation>
    <scope>NUCLEOTIDE SEQUENCE [LARGE SCALE GENOMIC DNA]</scope>
    <source>
        <strain>TRS</strain>
    </source>
</reference>
<keyword id="KW-0131">Cell cycle</keyword>
<keyword id="KW-0132">Cell division</keyword>
<keyword id="KW-0133">Cell shape</keyword>
<keyword id="KW-0961">Cell wall biogenesis/degradation</keyword>
<keyword id="KW-0963">Cytoplasm</keyword>
<keyword id="KW-0573">Peptidoglycan synthesis</keyword>
<keyword id="KW-0670">Pyruvate</keyword>
<keyword id="KW-1185">Reference proteome</keyword>
<keyword id="KW-0808">Transferase</keyword>
<feature type="chain" id="PRO_0000231299" description="UDP-N-acetylglucosamine 1-carboxyvinyltransferase">
    <location>
        <begin position="1"/>
        <end position="425"/>
    </location>
</feature>
<feature type="active site" description="Proton donor" evidence="1">
    <location>
        <position position="124"/>
    </location>
</feature>
<feature type="binding site" evidence="1">
    <location>
        <begin position="23"/>
        <end position="24"/>
    </location>
    <ligand>
        <name>phosphoenolpyruvate</name>
        <dbReference type="ChEBI" id="CHEBI:58702"/>
    </ligand>
</feature>
<feature type="binding site" evidence="1">
    <location>
        <position position="100"/>
    </location>
    <ligand>
        <name>UDP-N-acetyl-alpha-D-glucosamine</name>
        <dbReference type="ChEBI" id="CHEBI:57705"/>
    </ligand>
</feature>
<feature type="binding site" evidence="1">
    <location>
        <position position="313"/>
    </location>
    <ligand>
        <name>UDP-N-acetyl-alpha-D-glucosamine</name>
        <dbReference type="ChEBI" id="CHEBI:57705"/>
    </ligand>
</feature>
<feature type="binding site" evidence="1">
    <location>
        <position position="335"/>
    </location>
    <ligand>
        <name>UDP-N-acetyl-alpha-D-glucosamine</name>
        <dbReference type="ChEBI" id="CHEBI:57705"/>
    </ligand>
</feature>
<feature type="modified residue" description="2-(S-cysteinyl)pyruvic acid O-phosphothioketal" evidence="1">
    <location>
        <position position="124"/>
    </location>
</feature>
<accession>Q5GRP6</accession>
<dbReference type="EC" id="2.5.1.7" evidence="1"/>
<dbReference type="EMBL" id="AE017321">
    <property type="protein sequence ID" value="AAW71328.1"/>
    <property type="molecule type" value="Genomic_DNA"/>
</dbReference>
<dbReference type="RefSeq" id="WP_011256937.1">
    <property type="nucleotide sequence ID" value="NC_006833.1"/>
</dbReference>
<dbReference type="SMR" id="Q5GRP6"/>
<dbReference type="STRING" id="292805.Wbm0740"/>
<dbReference type="KEGG" id="wbm:Wbm0740"/>
<dbReference type="eggNOG" id="COG0766">
    <property type="taxonomic scope" value="Bacteria"/>
</dbReference>
<dbReference type="HOGENOM" id="CLU_027387_0_0_5"/>
<dbReference type="UniPathway" id="UPA00219"/>
<dbReference type="Proteomes" id="UP000000534">
    <property type="component" value="Chromosome"/>
</dbReference>
<dbReference type="GO" id="GO:0005737">
    <property type="term" value="C:cytoplasm"/>
    <property type="evidence" value="ECO:0007669"/>
    <property type="project" value="UniProtKB-SubCell"/>
</dbReference>
<dbReference type="GO" id="GO:0008760">
    <property type="term" value="F:UDP-N-acetylglucosamine 1-carboxyvinyltransferase activity"/>
    <property type="evidence" value="ECO:0007669"/>
    <property type="project" value="UniProtKB-UniRule"/>
</dbReference>
<dbReference type="GO" id="GO:0051301">
    <property type="term" value="P:cell division"/>
    <property type="evidence" value="ECO:0007669"/>
    <property type="project" value="UniProtKB-KW"/>
</dbReference>
<dbReference type="GO" id="GO:0071555">
    <property type="term" value="P:cell wall organization"/>
    <property type="evidence" value="ECO:0007669"/>
    <property type="project" value="UniProtKB-KW"/>
</dbReference>
<dbReference type="GO" id="GO:0009252">
    <property type="term" value="P:peptidoglycan biosynthetic process"/>
    <property type="evidence" value="ECO:0007669"/>
    <property type="project" value="UniProtKB-UniRule"/>
</dbReference>
<dbReference type="GO" id="GO:0008360">
    <property type="term" value="P:regulation of cell shape"/>
    <property type="evidence" value="ECO:0007669"/>
    <property type="project" value="UniProtKB-KW"/>
</dbReference>
<dbReference type="GO" id="GO:0019277">
    <property type="term" value="P:UDP-N-acetylgalactosamine biosynthetic process"/>
    <property type="evidence" value="ECO:0007669"/>
    <property type="project" value="InterPro"/>
</dbReference>
<dbReference type="CDD" id="cd01555">
    <property type="entry name" value="UdpNAET"/>
    <property type="match status" value="1"/>
</dbReference>
<dbReference type="Gene3D" id="3.65.10.10">
    <property type="entry name" value="Enolpyruvate transferase domain"/>
    <property type="match status" value="2"/>
</dbReference>
<dbReference type="HAMAP" id="MF_00111">
    <property type="entry name" value="MurA"/>
    <property type="match status" value="1"/>
</dbReference>
<dbReference type="InterPro" id="IPR001986">
    <property type="entry name" value="Enolpyruvate_Tfrase_dom"/>
</dbReference>
<dbReference type="InterPro" id="IPR036968">
    <property type="entry name" value="Enolpyruvate_Tfrase_sf"/>
</dbReference>
<dbReference type="InterPro" id="IPR050068">
    <property type="entry name" value="MurA_subfamily"/>
</dbReference>
<dbReference type="InterPro" id="IPR013792">
    <property type="entry name" value="RNA3'P_cycl/enolpyr_Trfase_a/b"/>
</dbReference>
<dbReference type="InterPro" id="IPR005750">
    <property type="entry name" value="UDP_GlcNAc_COvinyl_MurA"/>
</dbReference>
<dbReference type="NCBIfam" id="TIGR01072">
    <property type="entry name" value="murA"/>
    <property type="match status" value="1"/>
</dbReference>
<dbReference type="NCBIfam" id="NF006873">
    <property type="entry name" value="PRK09369.1"/>
    <property type="match status" value="1"/>
</dbReference>
<dbReference type="PANTHER" id="PTHR43783">
    <property type="entry name" value="UDP-N-ACETYLGLUCOSAMINE 1-CARBOXYVINYLTRANSFERASE"/>
    <property type="match status" value="1"/>
</dbReference>
<dbReference type="PANTHER" id="PTHR43783:SF1">
    <property type="entry name" value="UDP-N-ACETYLGLUCOSAMINE 1-CARBOXYVINYLTRANSFERASE"/>
    <property type="match status" value="1"/>
</dbReference>
<dbReference type="Pfam" id="PF00275">
    <property type="entry name" value="EPSP_synthase"/>
    <property type="match status" value="1"/>
</dbReference>
<dbReference type="SUPFAM" id="SSF55205">
    <property type="entry name" value="EPT/RTPC-like"/>
    <property type="match status" value="1"/>
</dbReference>
<name>MURA_WOLTR</name>
<gene>
    <name evidence="1" type="primary">murA</name>
    <name type="ordered locus">Wbm0740</name>
</gene>
<protein>
    <recommendedName>
        <fullName evidence="1">UDP-N-acetylglucosamine 1-carboxyvinyltransferase</fullName>
        <ecNumber evidence="1">2.5.1.7</ecNumber>
    </recommendedName>
    <alternativeName>
        <fullName evidence="1">Enoylpyruvate transferase</fullName>
    </alternativeName>
    <alternativeName>
        <fullName evidence="1">UDP-N-acetylglucosamine enolpyruvyl transferase</fullName>
        <shortName evidence="1">EPT</shortName>
    </alternativeName>
</protein>
<organism>
    <name type="scientific">Wolbachia sp. subsp. Brugia malayi (strain TRS)</name>
    <dbReference type="NCBI Taxonomy" id="292805"/>
    <lineage>
        <taxon>Bacteria</taxon>
        <taxon>Pseudomonadati</taxon>
        <taxon>Pseudomonadota</taxon>
        <taxon>Alphaproteobacteria</taxon>
        <taxon>Rickettsiales</taxon>
        <taxon>Anaplasmataceae</taxon>
        <taxon>Wolbachieae</taxon>
        <taxon>Wolbachia</taxon>
    </lineage>
</organism>